<accession>Q55FK4</accession>
<evidence type="ECO:0000250" key="1"/>
<evidence type="ECO:0000250" key="2">
    <source>
        <dbReference type="UniProtKB" id="Q12354"/>
    </source>
</evidence>
<evidence type="ECO:0000305" key="3"/>
<reference key="1">
    <citation type="journal article" date="2005" name="Nature">
        <title>The genome of the social amoeba Dictyostelium discoideum.</title>
        <authorList>
            <person name="Eichinger L."/>
            <person name="Pachebat J.A."/>
            <person name="Gloeckner G."/>
            <person name="Rajandream M.A."/>
            <person name="Sucgang R."/>
            <person name="Berriman M."/>
            <person name="Song J."/>
            <person name="Olsen R."/>
            <person name="Szafranski K."/>
            <person name="Xu Q."/>
            <person name="Tunggal B."/>
            <person name="Kummerfeld S."/>
            <person name="Madera M."/>
            <person name="Konfortov B.A."/>
            <person name="Rivero F."/>
            <person name="Bankier A.T."/>
            <person name="Lehmann R."/>
            <person name="Hamlin N."/>
            <person name="Davies R."/>
            <person name="Gaudet P."/>
            <person name="Fey P."/>
            <person name="Pilcher K."/>
            <person name="Chen G."/>
            <person name="Saunders D."/>
            <person name="Sodergren E.J."/>
            <person name="Davis P."/>
            <person name="Kerhornou A."/>
            <person name="Nie X."/>
            <person name="Hall N."/>
            <person name="Anjard C."/>
            <person name="Hemphill L."/>
            <person name="Bason N."/>
            <person name="Farbrother P."/>
            <person name="Desany B."/>
            <person name="Just E."/>
            <person name="Morio T."/>
            <person name="Rost R."/>
            <person name="Churcher C.M."/>
            <person name="Cooper J."/>
            <person name="Haydock S."/>
            <person name="van Driessche N."/>
            <person name="Cronin A."/>
            <person name="Goodhead I."/>
            <person name="Muzny D.M."/>
            <person name="Mourier T."/>
            <person name="Pain A."/>
            <person name="Lu M."/>
            <person name="Harper D."/>
            <person name="Lindsay R."/>
            <person name="Hauser H."/>
            <person name="James K.D."/>
            <person name="Quiles M."/>
            <person name="Madan Babu M."/>
            <person name="Saito T."/>
            <person name="Buchrieser C."/>
            <person name="Wardroper A."/>
            <person name="Felder M."/>
            <person name="Thangavelu M."/>
            <person name="Johnson D."/>
            <person name="Knights A."/>
            <person name="Loulseged H."/>
            <person name="Mungall K.L."/>
            <person name="Oliver K."/>
            <person name="Price C."/>
            <person name="Quail M.A."/>
            <person name="Urushihara H."/>
            <person name="Hernandez J."/>
            <person name="Rabbinowitsch E."/>
            <person name="Steffen D."/>
            <person name="Sanders M."/>
            <person name="Ma J."/>
            <person name="Kohara Y."/>
            <person name="Sharp S."/>
            <person name="Simmonds M.N."/>
            <person name="Spiegler S."/>
            <person name="Tivey A."/>
            <person name="Sugano S."/>
            <person name="White B."/>
            <person name="Walker D."/>
            <person name="Woodward J.R."/>
            <person name="Winckler T."/>
            <person name="Tanaka Y."/>
            <person name="Shaulsky G."/>
            <person name="Schleicher M."/>
            <person name="Weinstock G.M."/>
            <person name="Rosenthal A."/>
            <person name="Cox E.C."/>
            <person name="Chisholm R.L."/>
            <person name="Gibbs R.A."/>
            <person name="Loomis W.F."/>
            <person name="Platzer M."/>
            <person name="Kay R.R."/>
            <person name="Williams J.G."/>
            <person name="Dear P.H."/>
            <person name="Noegel A.A."/>
            <person name="Barrell B.G."/>
            <person name="Kuspa A."/>
        </authorList>
    </citation>
    <scope>NUCLEOTIDE SEQUENCE [LARGE SCALE GENOMIC DNA]</scope>
    <source>
        <strain>AX4</strain>
    </source>
</reference>
<reference key="2">
    <citation type="journal article" date="2006" name="J. Proteome Res.">
        <title>Identification of novel centrosomal proteins in Dictyostelium discoideum by comparative proteomic approaches.</title>
        <authorList>
            <person name="Reinders Y."/>
            <person name="Schulz I."/>
            <person name="Graef R."/>
            <person name="Sickmann A."/>
        </authorList>
    </citation>
    <scope>IDENTIFICATION BY MASS SPECTROMETRY [LARGE SCALE ANALYSIS]</scope>
</reference>
<protein>
    <recommendedName>
        <fullName>Acyl-protein thioesterase 1 homolog 2</fullName>
        <ecNumber evidence="2">3.1.2.-</ecNumber>
    </recommendedName>
    <alternativeName>
        <fullName>Palmitoyl-protein hydrolase</fullName>
        <ecNumber evidence="2">3.1.2.22</ecNumber>
    </alternativeName>
</protein>
<feature type="chain" id="PRO_0000331201" description="Acyl-protein thioesterase 1 homolog 2">
    <location>
        <begin position="1"/>
        <end position="222"/>
    </location>
</feature>
<feature type="active site" description="Charge relay system" evidence="1">
    <location>
        <position position="116"/>
    </location>
</feature>
<feature type="active site" description="Charge relay system" evidence="1">
    <location>
        <position position="169"/>
    </location>
</feature>
<feature type="active site" description="Charge relay system" evidence="1">
    <location>
        <position position="202"/>
    </location>
</feature>
<sequence length="222" mass="24547">MSNLIEIKSKSTHTATVIFLHGLMDTGKGWETRMENIISMGGLDHIKFVLPTAPTIPISINFGNKGTAWCNVTAFYPGSEEDLIGLEKSMKLVEALIEEEIKNGIPAERIILSGFSQGGALTLYTGYQSKHKLAALITLSGFSPSLSLPSKIKPENKDIPLTMFHGTDDKVVNCKWGELSHKSYLKVGIKNSQFISITNLDHSSNEFELKQVHDLIEKYLPK</sequence>
<keyword id="KW-0963">Cytoplasm</keyword>
<keyword id="KW-0276">Fatty acid metabolism</keyword>
<keyword id="KW-0378">Hydrolase</keyword>
<keyword id="KW-0443">Lipid metabolism</keyword>
<keyword id="KW-0539">Nucleus</keyword>
<keyword id="KW-1185">Reference proteome</keyword>
<keyword id="KW-0719">Serine esterase</keyword>
<organism>
    <name type="scientific">Dictyostelium discoideum</name>
    <name type="common">Social amoeba</name>
    <dbReference type="NCBI Taxonomy" id="44689"/>
    <lineage>
        <taxon>Eukaryota</taxon>
        <taxon>Amoebozoa</taxon>
        <taxon>Evosea</taxon>
        <taxon>Eumycetozoa</taxon>
        <taxon>Dictyostelia</taxon>
        <taxon>Dictyosteliales</taxon>
        <taxon>Dictyosteliaceae</taxon>
        <taxon>Dictyostelium</taxon>
    </lineage>
</organism>
<gene>
    <name type="ORF">DDB_G0268064</name>
</gene>
<name>APT12_DICDI</name>
<dbReference type="EC" id="3.1.2.-" evidence="2"/>
<dbReference type="EC" id="3.1.2.22" evidence="2"/>
<dbReference type="EMBL" id="AAFI02000003">
    <property type="protein sequence ID" value="EAL73485.1"/>
    <property type="molecule type" value="Genomic_DNA"/>
</dbReference>
<dbReference type="RefSeq" id="XP_647529.1">
    <property type="nucleotide sequence ID" value="XM_642437.1"/>
</dbReference>
<dbReference type="SMR" id="Q55FK4"/>
<dbReference type="FunCoup" id="Q55FK4">
    <property type="interactions" value="42"/>
</dbReference>
<dbReference type="IntAct" id="Q55FK4">
    <property type="interactions" value="1"/>
</dbReference>
<dbReference type="STRING" id="44689.Q55FK4"/>
<dbReference type="ESTHER" id="dicdi-q55fk4">
    <property type="family name" value="LYsophospholipase_carboxylesterase"/>
</dbReference>
<dbReference type="PaxDb" id="44689-DDB0233905"/>
<dbReference type="EnsemblProtists" id="EAL73485">
    <property type="protein sequence ID" value="EAL73485"/>
    <property type="gene ID" value="DDB_G0268064"/>
</dbReference>
<dbReference type="GeneID" id="8616336"/>
<dbReference type="KEGG" id="ddi:DDB_G0268064"/>
<dbReference type="dictyBase" id="DDB_G0268064"/>
<dbReference type="VEuPathDB" id="AmoebaDB:DDB_G0268064"/>
<dbReference type="eggNOG" id="KOG2112">
    <property type="taxonomic scope" value="Eukaryota"/>
</dbReference>
<dbReference type="HOGENOM" id="CLU_049413_3_5_1"/>
<dbReference type="InParanoid" id="Q55FK4"/>
<dbReference type="OMA" id="LMFRTYN"/>
<dbReference type="PhylomeDB" id="Q55FK4"/>
<dbReference type="Reactome" id="R-DDI-203615">
    <property type="pathway name" value="eNOS activation"/>
</dbReference>
<dbReference type="Reactome" id="R-DDI-9648002">
    <property type="pathway name" value="RAS processing"/>
</dbReference>
<dbReference type="PRO" id="PR:Q55FK4"/>
<dbReference type="Proteomes" id="UP000002195">
    <property type="component" value="Chromosome 1"/>
</dbReference>
<dbReference type="GO" id="GO:0005737">
    <property type="term" value="C:cytoplasm"/>
    <property type="evidence" value="ECO:0000318"/>
    <property type="project" value="GO_Central"/>
</dbReference>
<dbReference type="GO" id="GO:0005634">
    <property type="term" value="C:nucleus"/>
    <property type="evidence" value="ECO:0007669"/>
    <property type="project" value="UniProtKB-SubCell"/>
</dbReference>
<dbReference type="GO" id="GO:0045335">
    <property type="term" value="C:phagocytic vesicle"/>
    <property type="evidence" value="ECO:0007005"/>
    <property type="project" value="dictyBase"/>
</dbReference>
<dbReference type="GO" id="GO:0052689">
    <property type="term" value="F:carboxylic ester hydrolase activity"/>
    <property type="evidence" value="ECO:0000318"/>
    <property type="project" value="GO_Central"/>
</dbReference>
<dbReference type="GO" id="GO:0008474">
    <property type="term" value="F:palmitoyl-(protein) hydrolase activity"/>
    <property type="evidence" value="ECO:0000318"/>
    <property type="project" value="GO_Central"/>
</dbReference>
<dbReference type="GO" id="GO:0006631">
    <property type="term" value="P:fatty acid metabolic process"/>
    <property type="evidence" value="ECO:0007669"/>
    <property type="project" value="UniProtKB-KW"/>
</dbReference>
<dbReference type="Gene3D" id="3.40.50.1820">
    <property type="entry name" value="alpha/beta hydrolase"/>
    <property type="match status" value="1"/>
</dbReference>
<dbReference type="InterPro" id="IPR029058">
    <property type="entry name" value="AB_hydrolase_fold"/>
</dbReference>
<dbReference type="InterPro" id="IPR050565">
    <property type="entry name" value="LYPA1-2/EST-like"/>
</dbReference>
<dbReference type="InterPro" id="IPR003140">
    <property type="entry name" value="PLipase/COase/thioEstase"/>
</dbReference>
<dbReference type="PANTHER" id="PTHR10655:SF21">
    <property type="entry name" value="ACYL-PROTEIN THIOESTERASE 1 HOMOLOG 2"/>
    <property type="match status" value="1"/>
</dbReference>
<dbReference type="PANTHER" id="PTHR10655">
    <property type="entry name" value="LYSOPHOSPHOLIPASE-RELATED"/>
    <property type="match status" value="1"/>
</dbReference>
<dbReference type="Pfam" id="PF02230">
    <property type="entry name" value="Abhydrolase_2"/>
    <property type="match status" value="1"/>
</dbReference>
<dbReference type="SUPFAM" id="SSF53474">
    <property type="entry name" value="alpha/beta-Hydrolases"/>
    <property type="match status" value="1"/>
</dbReference>
<proteinExistence type="evidence at protein level"/>
<comment type="function">
    <text evidence="2">Hydrolyzes fatty acids from S-acylated cysteine residues in proteins with a strong preference for palmitoylated G-alpha proteins over other acyl substrates. Mediates the deacylation of G-alpha proteins such as GPA1 in vivo, but has weak or no activity toward palmitoylated Ras proteins. Has weak lysophospholipase activity in vitro; however such activity may not exist in vivo.</text>
</comment>
<comment type="catalytic activity">
    <reaction evidence="2">
        <text>S-hexadecanoyl-L-cysteinyl-[protein] + H2O = L-cysteinyl-[protein] + hexadecanoate + H(+)</text>
        <dbReference type="Rhea" id="RHEA:19233"/>
        <dbReference type="Rhea" id="RHEA-COMP:10131"/>
        <dbReference type="Rhea" id="RHEA-COMP:11032"/>
        <dbReference type="ChEBI" id="CHEBI:7896"/>
        <dbReference type="ChEBI" id="CHEBI:15377"/>
        <dbReference type="ChEBI" id="CHEBI:15378"/>
        <dbReference type="ChEBI" id="CHEBI:29950"/>
        <dbReference type="ChEBI" id="CHEBI:74151"/>
        <dbReference type="EC" id="3.1.2.22"/>
    </reaction>
</comment>
<comment type="subcellular location">
    <subcellularLocation>
        <location evidence="2">Cytoplasm</location>
    </subcellularLocation>
    <subcellularLocation>
        <location evidence="2">Nucleus</location>
    </subcellularLocation>
</comment>
<comment type="similarity">
    <text evidence="3">Belongs to the AB hydrolase superfamily. AB hydrolase 2 family.</text>
</comment>